<keyword id="KW-0325">Glycoprotein</keyword>
<keyword id="KW-0406">Ion transport</keyword>
<keyword id="KW-0472">Membrane</keyword>
<keyword id="KW-1185">Reference proteome</keyword>
<keyword id="KW-0812">Transmembrane</keyword>
<keyword id="KW-1133">Transmembrane helix</keyword>
<keyword id="KW-0813">Transport</keyword>
<dbReference type="EMBL" id="CM009294">
    <property type="protein sequence ID" value="PNT37312.1"/>
    <property type="molecule type" value="Genomic_DNA"/>
</dbReference>
<dbReference type="SMR" id="A0A2K2AIF4"/>
<dbReference type="InParanoid" id="A0A2K2AIF4"/>
<dbReference type="Proteomes" id="UP000006729">
    <property type="component" value="Chromosome 5"/>
</dbReference>
<dbReference type="GO" id="GO:0005886">
    <property type="term" value="C:plasma membrane"/>
    <property type="evidence" value="ECO:0000318"/>
    <property type="project" value="GO_Central"/>
</dbReference>
<dbReference type="GO" id="GO:0015086">
    <property type="term" value="F:cadmium ion transmembrane transporter activity"/>
    <property type="evidence" value="ECO:0000318"/>
    <property type="project" value="GO_Central"/>
</dbReference>
<dbReference type="GO" id="GO:0005384">
    <property type="term" value="F:manganese ion transmembrane transporter activity"/>
    <property type="evidence" value="ECO:0000318"/>
    <property type="project" value="GO_Central"/>
</dbReference>
<dbReference type="GO" id="GO:0034755">
    <property type="term" value="P:iron ion transmembrane transport"/>
    <property type="evidence" value="ECO:0000318"/>
    <property type="project" value="GO_Central"/>
</dbReference>
<dbReference type="GO" id="GO:0006828">
    <property type="term" value="P:manganese ion transport"/>
    <property type="evidence" value="ECO:0000318"/>
    <property type="project" value="GO_Central"/>
</dbReference>
<dbReference type="HAMAP" id="MF_00221">
    <property type="entry name" value="NRAMP"/>
    <property type="match status" value="1"/>
</dbReference>
<dbReference type="InterPro" id="IPR001046">
    <property type="entry name" value="NRAMP_fam"/>
</dbReference>
<dbReference type="NCBIfam" id="TIGR01197">
    <property type="entry name" value="nramp"/>
    <property type="match status" value="1"/>
</dbReference>
<dbReference type="NCBIfam" id="NF037982">
    <property type="entry name" value="Nramp_1"/>
    <property type="match status" value="1"/>
</dbReference>
<dbReference type="PANTHER" id="PTHR11706:SF77">
    <property type="entry name" value="METAL TRANSPORTER NRAMP5"/>
    <property type="match status" value="1"/>
</dbReference>
<dbReference type="PANTHER" id="PTHR11706">
    <property type="entry name" value="SOLUTE CARRIER PROTEIN FAMILY 11 MEMBER"/>
    <property type="match status" value="1"/>
</dbReference>
<dbReference type="Pfam" id="PF01566">
    <property type="entry name" value="Nramp"/>
    <property type="match status" value="1"/>
</dbReference>
<dbReference type="PRINTS" id="PR00447">
    <property type="entry name" value="NATRESASSCMP"/>
</dbReference>
<comment type="function">
    <text evidence="4">Probable divalent metal transporter.</text>
</comment>
<comment type="subcellular location">
    <subcellularLocation>
        <location evidence="1">Membrane</location>
        <topology evidence="1">Multi-pass membrane protein</topology>
    </subcellularLocation>
</comment>
<comment type="similarity">
    <text evidence="6">Belongs to the NRAMP (TC 2.A.55) family.</text>
</comment>
<organism>
    <name type="scientific">Populus trichocarpa</name>
    <name type="common">Western balsam poplar</name>
    <name type="synonym">Populus balsamifera subsp. trichocarpa</name>
    <dbReference type="NCBI Taxonomy" id="3694"/>
    <lineage>
        <taxon>Eukaryota</taxon>
        <taxon>Viridiplantae</taxon>
        <taxon>Streptophyta</taxon>
        <taxon>Embryophyta</taxon>
        <taxon>Tracheophyta</taxon>
        <taxon>Spermatophyta</taxon>
        <taxon>Magnoliopsida</taxon>
        <taxon>eudicotyledons</taxon>
        <taxon>Gunneridae</taxon>
        <taxon>Pentapetalae</taxon>
        <taxon>rosids</taxon>
        <taxon>fabids</taxon>
        <taxon>Malpighiales</taxon>
        <taxon>Salicaceae</taxon>
        <taxon>Saliceae</taxon>
        <taxon>Populus</taxon>
    </lineage>
</organism>
<proteinExistence type="inferred from homology"/>
<evidence type="ECO:0000255" key="1"/>
<evidence type="ECO:0000255" key="2">
    <source>
        <dbReference type="PROSITE-ProRule" id="PRU00498"/>
    </source>
</evidence>
<evidence type="ECO:0000256" key="3">
    <source>
        <dbReference type="SAM" id="MobiDB-lite"/>
    </source>
</evidence>
<evidence type="ECO:0000303" key="4">
    <source>
    </source>
</evidence>
<evidence type="ECO:0000303" key="5">
    <source>
    </source>
</evidence>
<evidence type="ECO:0000305" key="6"/>
<gene>
    <name evidence="4 5" type="primary">NRAMP7.1</name>
    <name evidence="6" type="ordered locus">Potri.005G181000</name>
</gene>
<name>NRP71_POPTR</name>
<accession>A0A2K2AIF4</accession>
<feature type="chain" id="PRO_0000457942" description="Metal transporter Nramp7.1">
    <location>
        <begin position="1"/>
        <end position="581"/>
    </location>
</feature>
<feature type="transmembrane region" description="Helical; Name=1" evidence="1">
    <location>
        <begin position="57"/>
        <end position="77"/>
    </location>
</feature>
<feature type="transmembrane region" description="Helical; Name=2" evidence="1">
    <location>
        <begin position="90"/>
        <end position="110"/>
    </location>
</feature>
<feature type="transmembrane region" description="Helical; Name=3" evidence="1">
    <location>
        <begin position="146"/>
        <end position="166"/>
    </location>
</feature>
<feature type="transmembrane region" description="Helical; Name=4" evidence="1">
    <location>
        <begin position="181"/>
        <end position="201"/>
    </location>
</feature>
<feature type="transmembrane region" description="Helical; Name=5" evidence="1">
    <location>
        <begin position="224"/>
        <end position="244"/>
    </location>
</feature>
<feature type="transmembrane region" description="Helical; Name=6" evidence="1">
    <location>
        <begin position="270"/>
        <end position="290"/>
    </location>
</feature>
<feature type="transmembrane region" description="Helical; Name=7" evidence="1">
    <location>
        <begin position="307"/>
        <end position="327"/>
    </location>
</feature>
<feature type="transmembrane region" description="Helical; Name=8" evidence="1">
    <location>
        <begin position="370"/>
        <end position="390"/>
    </location>
</feature>
<feature type="transmembrane region" description="Helical; Name=9" evidence="1">
    <location>
        <begin position="409"/>
        <end position="429"/>
    </location>
</feature>
<feature type="transmembrane region" description="Helical; Name=10" evidence="1">
    <location>
        <begin position="434"/>
        <end position="454"/>
    </location>
</feature>
<feature type="transmembrane region" description="Helical; Name=11" evidence="1">
    <location>
        <begin position="473"/>
        <end position="493"/>
    </location>
</feature>
<feature type="transmembrane region" description="Helical; Name=12" evidence="1">
    <location>
        <begin position="513"/>
        <end position="533"/>
    </location>
</feature>
<feature type="region of interest" description="Disordered" evidence="3">
    <location>
        <begin position="551"/>
        <end position="581"/>
    </location>
</feature>
<feature type="compositionally biased region" description="Basic and acidic residues" evidence="3">
    <location>
        <begin position="564"/>
        <end position="574"/>
    </location>
</feature>
<feature type="glycosylation site" description="N-linked (GlcNAc...) asparagine" evidence="2">
    <location>
        <position position="11"/>
    </location>
</feature>
<feature type="glycosylation site" description="N-linked (GlcNAc...) asparagine" evidence="2">
    <location>
        <position position="19"/>
    </location>
</feature>
<feature type="glycosylation site" description="N-linked (GlcNAc...) asparagine" evidence="2">
    <location>
        <position position="338"/>
    </location>
</feature>
<protein>
    <recommendedName>
        <fullName evidence="4 5">Metal transporter Nramp7.1</fullName>
        <shortName evidence="5">PotriNRAMP7.1</shortName>
        <shortName evidence="4">PtNRAMP7.1</shortName>
    </recommendedName>
    <alternativeName>
        <fullName evidence="6">Natural resistance-associated macrophage protein 7.1</fullName>
    </alternativeName>
</protein>
<sequence>MAGIQQQQLVNDTLPASWNGSSNRIASVNVEEGQPQPWVDDLDLEDPNHQKPGWRKFLSYVGPGFLVSLAYLDPGNLETDLQAGANHRYELLWVILIGLIFALIIQSLAANLGVSTGKTFKHHTSWILGKHLSELCKAEYPKYVKYCLWLLAEIAVIAADIPEGIISSLLYYFKLILDTYLLIGTAFALNILFHIPVWVGVLCTGCSTLLLLGLQKYGVRKLELLIAVLVFVMAACFFGEMSYVKPSATDVLKGMFIPKLSGQGATGDAIALLGALIMPHNLFLHSALVLSRKMPNSVRGINDACRYFLIESGFALFIAFLINLAVISVSGTVCSAQNLSSENADRCGDLTLNSASFLLQNVLGKSSSKIYAIALLASGQSSTITGTYAGQYIMQGFLELKMRKWIRNLVTRCIAIAPSLVVSIIGGSSGAGRLIIIASVLQMILSFELPFALIPLLKFSSSTTKMGPHKNSIYIIVISWILGLGIIGVNIYYLSTGFVGWLIDNNLPKVGNVFIGIIVFPLMAIYILAVIYLTFRKDSVVTFLGPNKNDPQQQANMENGLGPEMERVPYREDLADIPLPE</sequence>
<reference key="1">
    <citation type="journal article" date="2006" name="Science">
        <title>The genome of black cottonwood, Populus trichocarpa (Torr. &amp; Gray).</title>
        <authorList>
            <person name="Tuskan G.A."/>
            <person name="Difazio S."/>
            <person name="Jansson S."/>
            <person name="Bohlmann J."/>
            <person name="Grigoriev I."/>
            <person name="Hellsten U."/>
            <person name="Putnam N."/>
            <person name="Ralph S."/>
            <person name="Rombauts S."/>
            <person name="Salamov A."/>
            <person name="Schein J."/>
            <person name="Sterck L."/>
            <person name="Aerts A."/>
            <person name="Bhalerao R.R."/>
            <person name="Bhalerao R.P."/>
            <person name="Blaudez D."/>
            <person name="Boerjan W."/>
            <person name="Brun A."/>
            <person name="Brunner A."/>
            <person name="Busov V."/>
            <person name="Campbell M."/>
            <person name="Carlson J."/>
            <person name="Chalot M."/>
            <person name="Chapman J."/>
            <person name="Chen G.-L."/>
            <person name="Cooper D."/>
            <person name="Coutinho P.M."/>
            <person name="Couturier J."/>
            <person name="Covert S."/>
            <person name="Cronk Q."/>
            <person name="Cunningham R."/>
            <person name="Davis J."/>
            <person name="Degroeve S."/>
            <person name="Dejardin A."/>
            <person name="dePamphilis C.W."/>
            <person name="Detter J."/>
            <person name="Dirks B."/>
            <person name="Dubchak I."/>
            <person name="Duplessis S."/>
            <person name="Ehlting J."/>
            <person name="Ellis B."/>
            <person name="Gendler K."/>
            <person name="Goodstein D."/>
            <person name="Gribskov M."/>
            <person name="Grimwood J."/>
            <person name="Groover A."/>
            <person name="Gunter L."/>
            <person name="Hamberger B."/>
            <person name="Heinze B."/>
            <person name="Helariutta Y."/>
            <person name="Henrissat B."/>
            <person name="Holligan D."/>
            <person name="Holt R."/>
            <person name="Huang W."/>
            <person name="Islam-Faridi N."/>
            <person name="Jones S."/>
            <person name="Jones-Rhoades M."/>
            <person name="Jorgensen R."/>
            <person name="Joshi C."/>
            <person name="Kangasjaervi J."/>
            <person name="Karlsson J."/>
            <person name="Kelleher C."/>
            <person name="Kirkpatrick R."/>
            <person name="Kirst M."/>
            <person name="Kohler A."/>
            <person name="Kalluri U."/>
            <person name="Larimer F."/>
            <person name="Leebens-Mack J."/>
            <person name="Leple J.-C."/>
            <person name="Locascio P."/>
            <person name="Lou Y."/>
            <person name="Lucas S."/>
            <person name="Martin F."/>
            <person name="Montanini B."/>
            <person name="Napoli C."/>
            <person name="Nelson D.R."/>
            <person name="Nelson C."/>
            <person name="Nieminen K."/>
            <person name="Nilsson O."/>
            <person name="Pereda V."/>
            <person name="Peter G."/>
            <person name="Philippe R."/>
            <person name="Pilate G."/>
            <person name="Poliakov A."/>
            <person name="Razumovskaya J."/>
            <person name="Richardson P."/>
            <person name="Rinaldi C."/>
            <person name="Ritland K."/>
            <person name="Rouze P."/>
            <person name="Ryaboy D."/>
            <person name="Schmutz J."/>
            <person name="Schrader J."/>
            <person name="Segerman B."/>
            <person name="Shin H."/>
            <person name="Siddiqui A."/>
            <person name="Sterky F."/>
            <person name="Terry A."/>
            <person name="Tsai C.-J."/>
            <person name="Uberbacher E."/>
            <person name="Unneberg P."/>
            <person name="Vahala J."/>
            <person name="Wall K."/>
            <person name="Wessler S."/>
            <person name="Yang G."/>
            <person name="Yin T."/>
            <person name="Douglas C."/>
            <person name="Marra M."/>
            <person name="Sandberg G."/>
            <person name="Van de Peer Y."/>
            <person name="Rokhsar D.S."/>
        </authorList>
    </citation>
    <scope>NUCLEOTIDE SEQUENCE [LARGE SCALE GENOMIC DNA]</scope>
    <source>
        <strain>cv. Nisqually</strain>
    </source>
</reference>
<reference key="2">
    <citation type="journal article" date="2010" name="Cell. Mol. Life Sci.">
        <title>Genome-wide analysis of plant metal transporters, with an emphasis on poplar.</title>
        <authorList>
            <person name="Migeon A."/>
            <person name="Blaudez D."/>
            <person name="Wilkins O."/>
            <person name="Montanini B."/>
            <person name="Campbell M.M."/>
            <person name="Richaud P."/>
            <person name="Thomine S."/>
            <person name="Chalot M."/>
        </authorList>
    </citation>
    <scope>GENE FAMILY</scope>
    <scope>NOMENCLATURE</scope>
</reference>
<reference key="3">
    <citation type="journal article" date="2022" name="Mol. Biol. Evol.">
        <title>Duplication of NRAMP3 gene in poplars generated two homologous transporters with distinct functions.</title>
        <authorList>
            <person name="Pottier M."/>
            <person name="Le Thi V.A."/>
            <person name="Primard-Brisset C."/>
            <person name="Marion J."/>
            <person name="Bianchi M.W."/>
            <person name="Victor C."/>
            <person name="Dejardin A."/>
            <person name="Pilate G."/>
            <person name="Thomine S."/>
        </authorList>
    </citation>
    <scope>GENE FAMILY</scope>
    <source>
        <strain>cv. Nisqually</strain>
    </source>
</reference>